<evidence type="ECO:0000255" key="1">
    <source>
        <dbReference type="HAMAP-Rule" id="MF_03106"/>
    </source>
</evidence>
<feature type="chain" id="PRO_0000283691" description="Sulfate adenylyltransferase">
    <location>
        <begin position="1"/>
        <end position="574"/>
    </location>
</feature>
<feature type="region of interest" description="N-terminal" evidence="1">
    <location>
        <begin position="1"/>
        <end position="170"/>
    </location>
</feature>
<feature type="region of interest" description="Catalytic" evidence="1">
    <location>
        <begin position="171"/>
        <end position="395"/>
    </location>
</feature>
<feature type="region of interest" description="Allosteric regulation domain; adenylyl-sulfate kinase-like" evidence="1">
    <location>
        <begin position="396"/>
        <end position="574"/>
    </location>
</feature>
<feature type="active site" evidence="1">
    <location>
        <position position="199"/>
    </location>
</feature>
<feature type="active site" evidence="1">
    <location>
        <position position="200"/>
    </location>
</feature>
<feature type="active site" evidence="1">
    <location>
        <position position="201"/>
    </location>
</feature>
<feature type="binding site" evidence="1">
    <location>
        <begin position="198"/>
        <end position="201"/>
    </location>
    <ligand>
        <name>ATP</name>
        <dbReference type="ChEBI" id="CHEBI:30616"/>
    </ligand>
</feature>
<feature type="binding site" evidence="1">
    <location>
        <position position="198"/>
    </location>
    <ligand>
        <name>sulfate</name>
        <dbReference type="ChEBI" id="CHEBI:16189"/>
    </ligand>
</feature>
<feature type="binding site" evidence="1">
    <location>
        <position position="200"/>
    </location>
    <ligand>
        <name>sulfate</name>
        <dbReference type="ChEBI" id="CHEBI:16189"/>
    </ligand>
</feature>
<feature type="binding site" evidence="1">
    <location>
        <begin position="292"/>
        <end position="295"/>
    </location>
    <ligand>
        <name>ATP</name>
        <dbReference type="ChEBI" id="CHEBI:30616"/>
    </ligand>
</feature>
<feature type="binding site" evidence="1">
    <location>
        <position position="296"/>
    </location>
    <ligand>
        <name>sulfate</name>
        <dbReference type="ChEBI" id="CHEBI:16189"/>
    </ligand>
</feature>
<feature type="binding site" evidence="1">
    <location>
        <position position="334"/>
    </location>
    <ligand>
        <name>ATP</name>
        <dbReference type="ChEBI" id="CHEBI:30616"/>
    </ligand>
</feature>
<feature type="binding site" evidence="1">
    <location>
        <begin position="435"/>
        <end position="438"/>
    </location>
    <ligand>
        <name>3'-phosphoadenylyl sulfate</name>
        <dbReference type="ChEBI" id="CHEBI:58339"/>
        <note>allosteric inhibitor</note>
    </ligand>
</feature>
<feature type="binding site" evidence="1">
    <location>
        <position position="452"/>
    </location>
    <ligand>
        <name>3'-phosphoadenylyl sulfate</name>
        <dbReference type="ChEBI" id="CHEBI:58339"/>
        <note>allosteric inhibitor</note>
    </ligand>
</feature>
<feature type="binding site" evidence="1">
    <location>
        <begin position="478"/>
        <end position="479"/>
    </location>
    <ligand>
        <name>3'-phosphoadenylyl sulfate</name>
        <dbReference type="ChEBI" id="CHEBI:58339"/>
        <note>allosteric inhibitor</note>
    </ligand>
</feature>
<feature type="binding site" evidence="1">
    <location>
        <position position="516"/>
    </location>
    <ligand>
        <name>3'-phosphoadenylyl sulfate</name>
        <dbReference type="ChEBI" id="CHEBI:58339"/>
        <note>allosteric inhibitor</note>
    </ligand>
</feature>
<feature type="site" description="Transition state stabilizer" evidence="1">
    <location>
        <position position="204"/>
    </location>
</feature>
<feature type="site" description="Transition state stabilizer" evidence="1">
    <location>
        <position position="207"/>
    </location>
</feature>
<feature type="site" description="Induces change in substrate recognition on ATP binding" evidence="1">
    <location>
        <position position="331"/>
    </location>
</feature>
<comment type="function">
    <text evidence="1">Catalyzes the first intracellular reaction of sulfate assimilation, forming adenosine-5'-phosphosulfate (APS) from inorganic sulfate and ATP. Plays an important role in sulfate activation as a component of the biosynthesis pathway of sulfur-containing amino acids.</text>
</comment>
<comment type="catalytic activity">
    <reaction evidence="1">
        <text>sulfate + ATP + H(+) = adenosine 5'-phosphosulfate + diphosphate</text>
        <dbReference type="Rhea" id="RHEA:18133"/>
        <dbReference type="ChEBI" id="CHEBI:15378"/>
        <dbReference type="ChEBI" id="CHEBI:16189"/>
        <dbReference type="ChEBI" id="CHEBI:30616"/>
        <dbReference type="ChEBI" id="CHEBI:33019"/>
        <dbReference type="ChEBI" id="CHEBI:58243"/>
        <dbReference type="EC" id="2.7.7.4"/>
    </reaction>
</comment>
<comment type="activity regulation">
    <text evidence="1">Allosterically inhibited by 3'-phosphoadenosine 5'-phosphosulfate (PAPS).</text>
</comment>
<comment type="pathway">
    <text evidence="1">Sulfur metabolism; hydrogen sulfide biosynthesis; sulfite from sulfate: step 1/3.</text>
</comment>
<comment type="subunit">
    <text evidence="1">Homohexamer. Dimer of trimers.</text>
</comment>
<comment type="subcellular location">
    <subcellularLocation>
        <location evidence="1">Cytoplasm</location>
    </subcellularLocation>
</comment>
<comment type="domain">
    <text evidence="1">The adenylyl-sulfate kinase (APS kinase) is non-functional. It is involved in allosteric regulation by PAPS. PAPS binding induces a large rotational rearrangement of domains lowering the substrate affinity of the enzyme.</text>
</comment>
<comment type="similarity">
    <text evidence="1">In the N-terminal section; belongs to the sulfate adenylyltransferase family.</text>
</comment>
<comment type="similarity">
    <text evidence="1">In the C-terminal section; belongs to the APS kinase family.</text>
</comment>
<proteinExistence type="inferred from homology"/>
<protein>
    <recommendedName>
        <fullName evidence="1">Sulfate adenylyltransferase</fullName>
        <ecNumber evidence="1">2.7.7.4</ecNumber>
    </recommendedName>
    <alternativeName>
        <fullName evidence="1">ATP-sulfurylase</fullName>
    </alternativeName>
    <alternativeName>
        <fullName evidence="1">Sulfate adenylate transferase</fullName>
        <shortName evidence="1">SAT</shortName>
    </alternativeName>
</protein>
<name>MET3_PHANO</name>
<gene>
    <name evidence="1" type="primary">MET3</name>
    <name type="ORF">SNOG_00315</name>
</gene>
<keyword id="KW-0021">Allosteric enzyme</keyword>
<keyword id="KW-0028">Amino-acid biosynthesis</keyword>
<keyword id="KW-0067">ATP-binding</keyword>
<keyword id="KW-0198">Cysteine biosynthesis</keyword>
<keyword id="KW-0963">Cytoplasm</keyword>
<keyword id="KW-0486">Methionine biosynthesis</keyword>
<keyword id="KW-0547">Nucleotide-binding</keyword>
<keyword id="KW-0548">Nucleotidyltransferase</keyword>
<keyword id="KW-0808">Transferase</keyword>
<reference key="1">
    <citation type="journal article" date="2007" name="Plant Cell">
        <title>Dothideomycete-plant interactions illuminated by genome sequencing and EST analysis of the wheat pathogen Stagonospora nodorum.</title>
        <authorList>
            <person name="Hane J.K."/>
            <person name="Lowe R.G.T."/>
            <person name="Solomon P.S."/>
            <person name="Tan K.-C."/>
            <person name="Schoch C.L."/>
            <person name="Spatafora J.W."/>
            <person name="Crous P.W."/>
            <person name="Kodira C.D."/>
            <person name="Birren B.W."/>
            <person name="Galagan J.E."/>
            <person name="Torriani S.F.F."/>
            <person name="McDonald B.A."/>
            <person name="Oliver R.P."/>
        </authorList>
    </citation>
    <scope>NUCLEOTIDE SEQUENCE [LARGE SCALE GENOMIC DNA]</scope>
    <source>
        <strain>SN15 / ATCC MYA-4574 / FGSC 10173</strain>
    </source>
</reference>
<organism>
    <name type="scientific">Phaeosphaeria nodorum (strain SN15 / ATCC MYA-4574 / FGSC 10173)</name>
    <name type="common">Glume blotch fungus</name>
    <name type="synonym">Parastagonospora nodorum</name>
    <dbReference type="NCBI Taxonomy" id="321614"/>
    <lineage>
        <taxon>Eukaryota</taxon>
        <taxon>Fungi</taxon>
        <taxon>Dikarya</taxon>
        <taxon>Ascomycota</taxon>
        <taxon>Pezizomycotina</taxon>
        <taxon>Dothideomycetes</taxon>
        <taxon>Pleosporomycetidae</taxon>
        <taxon>Pleosporales</taxon>
        <taxon>Pleosporineae</taxon>
        <taxon>Phaeosphaeriaceae</taxon>
        <taxon>Parastagonospora</taxon>
    </lineage>
</organism>
<accession>Q0V6P9</accession>
<dbReference type="EC" id="2.7.7.4" evidence="1"/>
<dbReference type="EMBL" id="CH445325">
    <property type="protein sequence ID" value="EAT91810.1"/>
    <property type="molecule type" value="Genomic_DNA"/>
</dbReference>
<dbReference type="RefSeq" id="XP_001791005.1">
    <property type="nucleotide sequence ID" value="XM_001790953.1"/>
</dbReference>
<dbReference type="SMR" id="Q0V6P9"/>
<dbReference type="FunCoup" id="Q0V6P9">
    <property type="interactions" value="530"/>
</dbReference>
<dbReference type="STRING" id="321614.Q0V6P9"/>
<dbReference type="EnsemblFungi" id="SNOT_00315">
    <property type="protein sequence ID" value="SNOT_00315"/>
    <property type="gene ID" value="SNOG_00315"/>
</dbReference>
<dbReference type="GeneID" id="5967840"/>
<dbReference type="KEGG" id="pno:SNOG_00315"/>
<dbReference type="VEuPathDB" id="FungiDB:JI435_003150"/>
<dbReference type="eggNOG" id="KOG0636">
    <property type="taxonomic scope" value="Eukaryota"/>
</dbReference>
<dbReference type="HOGENOM" id="CLU_022950_0_0_1"/>
<dbReference type="InParanoid" id="Q0V6P9"/>
<dbReference type="OMA" id="MEMRYAG"/>
<dbReference type="OrthoDB" id="468at2759"/>
<dbReference type="UniPathway" id="UPA00140">
    <property type="reaction ID" value="UER00204"/>
</dbReference>
<dbReference type="Proteomes" id="UP000001055">
    <property type="component" value="Unassembled WGS sequence"/>
</dbReference>
<dbReference type="GO" id="GO:0005737">
    <property type="term" value="C:cytoplasm"/>
    <property type="evidence" value="ECO:0007669"/>
    <property type="project" value="UniProtKB-SubCell"/>
</dbReference>
<dbReference type="GO" id="GO:0004020">
    <property type="term" value="F:adenylylsulfate kinase activity"/>
    <property type="evidence" value="ECO:0007669"/>
    <property type="project" value="InterPro"/>
</dbReference>
<dbReference type="GO" id="GO:0005524">
    <property type="term" value="F:ATP binding"/>
    <property type="evidence" value="ECO:0007669"/>
    <property type="project" value="UniProtKB-KW"/>
</dbReference>
<dbReference type="GO" id="GO:0004781">
    <property type="term" value="F:sulfate adenylyltransferase (ATP) activity"/>
    <property type="evidence" value="ECO:0000318"/>
    <property type="project" value="GO_Central"/>
</dbReference>
<dbReference type="GO" id="GO:0019344">
    <property type="term" value="P:cysteine biosynthetic process"/>
    <property type="evidence" value="ECO:0007669"/>
    <property type="project" value="UniProtKB-KW"/>
</dbReference>
<dbReference type="GO" id="GO:0070814">
    <property type="term" value="P:hydrogen sulfide biosynthetic process"/>
    <property type="evidence" value="ECO:0007669"/>
    <property type="project" value="UniProtKB-UniRule"/>
</dbReference>
<dbReference type="GO" id="GO:0009086">
    <property type="term" value="P:methionine biosynthetic process"/>
    <property type="evidence" value="ECO:0007669"/>
    <property type="project" value="UniProtKB-KW"/>
</dbReference>
<dbReference type="GO" id="GO:0019379">
    <property type="term" value="P:sulfate assimilation, phosphoadenylyl sulfate reduction by phosphoadenylyl-sulfate reductase (thioredoxin)"/>
    <property type="evidence" value="ECO:0000318"/>
    <property type="project" value="GO_Central"/>
</dbReference>
<dbReference type="CDD" id="cd02027">
    <property type="entry name" value="APSK"/>
    <property type="match status" value="1"/>
</dbReference>
<dbReference type="CDD" id="cd00517">
    <property type="entry name" value="ATPS"/>
    <property type="match status" value="1"/>
</dbReference>
<dbReference type="FunFam" id="3.10.400.10:FF:000003">
    <property type="entry name" value="Sulfate adenylyltransferase"/>
    <property type="match status" value="1"/>
</dbReference>
<dbReference type="FunFam" id="3.40.50.300:FF:000802">
    <property type="entry name" value="Sulfate adenylyltransferase"/>
    <property type="match status" value="1"/>
</dbReference>
<dbReference type="FunFam" id="3.40.50.620:FF:000052">
    <property type="entry name" value="Sulfate adenylyltransferase"/>
    <property type="match status" value="1"/>
</dbReference>
<dbReference type="Gene3D" id="3.40.50.620">
    <property type="entry name" value="HUPs"/>
    <property type="match status" value="1"/>
</dbReference>
<dbReference type="Gene3D" id="3.40.50.300">
    <property type="entry name" value="P-loop containing nucleotide triphosphate hydrolases"/>
    <property type="match status" value="1"/>
</dbReference>
<dbReference type="Gene3D" id="3.10.400.10">
    <property type="entry name" value="Sulfate adenylyltransferase"/>
    <property type="match status" value="1"/>
</dbReference>
<dbReference type="HAMAP" id="MF_03106">
    <property type="entry name" value="Sulf_adenylyltr_euk"/>
    <property type="match status" value="1"/>
</dbReference>
<dbReference type="InterPro" id="IPR002891">
    <property type="entry name" value="APS_kinase"/>
</dbReference>
<dbReference type="InterPro" id="IPR025980">
    <property type="entry name" value="ATP-Sase_PUA-like_dom"/>
</dbReference>
<dbReference type="InterPro" id="IPR027417">
    <property type="entry name" value="P-loop_NTPase"/>
</dbReference>
<dbReference type="InterPro" id="IPR015947">
    <property type="entry name" value="PUA-like_sf"/>
</dbReference>
<dbReference type="InterPro" id="IPR014729">
    <property type="entry name" value="Rossmann-like_a/b/a_fold"/>
</dbReference>
<dbReference type="InterPro" id="IPR027535">
    <property type="entry name" value="Sulf_adenylyltr_euk"/>
</dbReference>
<dbReference type="InterPro" id="IPR050512">
    <property type="entry name" value="Sulf_AdTrans/APS_kinase"/>
</dbReference>
<dbReference type="InterPro" id="IPR024951">
    <property type="entry name" value="Sulfurylase_cat_dom"/>
</dbReference>
<dbReference type="InterPro" id="IPR002650">
    <property type="entry name" value="Sulphate_adenylyltransferase"/>
</dbReference>
<dbReference type="NCBIfam" id="TIGR00455">
    <property type="entry name" value="apsK"/>
    <property type="match status" value="1"/>
</dbReference>
<dbReference type="NCBIfam" id="NF004040">
    <property type="entry name" value="PRK05537.1"/>
    <property type="match status" value="1"/>
</dbReference>
<dbReference type="NCBIfam" id="TIGR00339">
    <property type="entry name" value="sopT"/>
    <property type="match status" value="1"/>
</dbReference>
<dbReference type="PANTHER" id="PTHR42700">
    <property type="entry name" value="SULFATE ADENYLYLTRANSFERASE"/>
    <property type="match status" value="1"/>
</dbReference>
<dbReference type="PANTHER" id="PTHR42700:SF1">
    <property type="entry name" value="SULFATE ADENYLYLTRANSFERASE"/>
    <property type="match status" value="1"/>
</dbReference>
<dbReference type="Pfam" id="PF01583">
    <property type="entry name" value="APS_kinase"/>
    <property type="match status" value="1"/>
</dbReference>
<dbReference type="Pfam" id="PF01747">
    <property type="entry name" value="ATP-sulfurylase"/>
    <property type="match status" value="1"/>
</dbReference>
<dbReference type="Pfam" id="PF14306">
    <property type="entry name" value="PUA_2"/>
    <property type="match status" value="1"/>
</dbReference>
<dbReference type="SUPFAM" id="SSF52374">
    <property type="entry name" value="Nucleotidylyl transferase"/>
    <property type="match status" value="1"/>
</dbReference>
<dbReference type="SUPFAM" id="SSF52540">
    <property type="entry name" value="P-loop containing nucleoside triphosphate hydrolases"/>
    <property type="match status" value="1"/>
</dbReference>
<dbReference type="SUPFAM" id="SSF88697">
    <property type="entry name" value="PUA domain-like"/>
    <property type="match status" value="1"/>
</dbReference>
<sequence>MANPPHGGVLKDLIARDAPRRQELYAEAEKLPAIVLSDRQLCDLELILNGGFSPLEGFMNEKDYTGVVAENRLADGNLFSIPITLDVSKETIDEVGVKAGARIALRDSRDDRNLAIITVDDIYKPDKVKEANEVFGDNDEAHPAVKYLHHTAKEFYVGGKVEAIDRLEHYDYVGLRYTPAELRLHFDKLGWQKVVAFQTRNPMHRAHRELTVRAARARQANVLIHPVVGLTKPGDIDHFTRVRVYQALMPRYPNGMAVLALLPLAMRMGGPREAIWHAIIRKNHGATHFIVGRDHAGPGKNSKGVDFYGPYDAQDAVEKYRDELGIEVVPFQQMTYLPDSDEYKPKDEVAKDIKTLDISGTELRKRLRTGQEIPEWFSYPEVVKVLRESHPPRNQQGFTVFLTGYQNSGKDAIARALNVTLNQQGGRSVSLLLGETVRSELSSELGFSREDRDKNIARIAFVAAELTKAGAAAIVAPIAPFQKSRQQARETVEKYGSFFLVHVATPLDHAEKTDRRGVYAKARAGEIKGFTGVDDPYEAPENADLVVDTSKTNVRTAVHQIVLLLESQGLLTQL</sequence>